<reference key="1">
    <citation type="journal article" date="1997" name="Plant Mol. Biol.">
        <title>Characterization of the cyclophilin gene family of Arabidopsis thaliana and phylogenetic analysis of known cyclophilin proteins.</title>
        <authorList>
            <person name="Chou I.T."/>
            <person name="Gasser C.S."/>
        </authorList>
    </citation>
    <scope>NUCLEOTIDE SEQUENCE [MRNA] (ISOFORM 1)</scope>
    <scope>TISSUE SPECIFICITY</scope>
    <scope>INDUCTION</scope>
    <source>
        <strain>cv. Columbia</strain>
        <tissue>Leaf</tissue>
    </source>
</reference>
<reference key="2">
    <citation type="journal article" date="1999" name="Nature">
        <title>Sequence and analysis of chromosome 2 of the plant Arabidopsis thaliana.</title>
        <authorList>
            <person name="Lin X."/>
            <person name="Kaul S."/>
            <person name="Rounsley S.D."/>
            <person name="Shea T.P."/>
            <person name="Benito M.-I."/>
            <person name="Town C.D."/>
            <person name="Fujii C.Y."/>
            <person name="Mason T.M."/>
            <person name="Bowman C.L."/>
            <person name="Barnstead M.E."/>
            <person name="Feldblyum T.V."/>
            <person name="Buell C.R."/>
            <person name="Ketchum K.A."/>
            <person name="Lee J.J."/>
            <person name="Ronning C.M."/>
            <person name="Koo H.L."/>
            <person name="Moffat K.S."/>
            <person name="Cronin L.A."/>
            <person name="Shen M."/>
            <person name="Pai G."/>
            <person name="Van Aken S."/>
            <person name="Umayam L."/>
            <person name="Tallon L.J."/>
            <person name="Gill J.E."/>
            <person name="Adams M.D."/>
            <person name="Carrera A.J."/>
            <person name="Creasy T.H."/>
            <person name="Goodman H.M."/>
            <person name="Somerville C.R."/>
            <person name="Copenhaver G.P."/>
            <person name="Preuss D."/>
            <person name="Nierman W.C."/>
            <person name="White O."/>
            <person name="Eisen J.A."/>
            <person name="Salzberg S.L."/>
            <person name="Fraser C.M."/>
            <person name="Venter J.C."/>
        </authorList>
    </citation>
    <scope>NUCLEOTIDE SEQUENCE [LARGE SCALE GENOMIC DNA]</scope>
    <source>
        <strain>cv. Columbia</strain>
    </source>
</reference>
<reference key="3">
    <citation type="journal article" date="2017" name="Plant J.">
        <title>Araport11: a complete reannotation of the Arabidopsis thaliana reference genome.</title>
        <authorList>
            <person name="Cheng C.Y."/>
            <person name="Krishnakumar V."/>
            <person name="Chan A.P."/>
            <person name="Thibaud-Nissen F."/>
            <person name="Schobel S."/>
            <person name="Town C.D."/>
        </authorList>
    </citation>
    <scope>GENOME REANNOTATION</scope>
    <source>
        <strain>cv. Columbia</strain>
    </source>
</reference>
<reference key="4">
    <citation type="journal article" date="2003" name="Science">
        <title>Empirical analysis of transcriptional activity in the Arabidopsis genome.</title>
        <authorList>
            <person name="Yamada K."/>
            <person name="Lim J."/>
            <person name="Dale J.M."/>
            <person name="Chen H."/>
            <person name="Shinn P."/>
            <person name="Palm C.J."/>
            <person name="Southwick A.M."/>
            <person name="Wu H.C."/>
            <person name="Kim C.J."/>
            <person name="Nguyen M."/>
            <person name="Pham P.K."/>
            <person name="Cheuk R.F."/>
            <person name="Karlin-Newmann G."/>
            <person name="Liu S.X."/>
            <person name="Lam B."/>
            <person name="Sakano H."/>
            <person name="Wu T."/>
            <person name="Yu G."/>
            <person name="Miranda M."/>
            <person name="Quach H.L."/>
            <person name="Tripp M."/>
            <person name="Chang C.H."/>
            <person name="Lee J.M."/>
            <person name="Toriumi M.J."/>
            <person name="Chan M.M."/>
            <person name="Tang C.C."/>
            <person name="Onodera C.S."/>
            <person name="Deng J.M."/>
            <person name="Akiyama K."/>
            <person name="Ansari Y."/>
            <person name="Arakawa T."/>
            <person name="Banh J."/>
            <person name="Banno F."/>
            <person name="Bowser L."/>
            <person name="Brooks S.Y."/>
            <person name="Carninci P."/>
            <person name="Chao Q."/>
            <person name="Choy N."/>
            <person name="Enju A."/>
            <person name="Goldsmith A.D."/>
            <person name="Gurjal M."/>
            <person name="Hansen N.F."/>
            <person name="Hayashizaki Y."/>
            <person name="Johnson-Hopson C."/>
            <person name="Hsuan V.W."/>
            <person name="Iida K."/>
            <person name="Karnes M."/>
            <person name="Khan S."/>
            <person name="Koesema E."/>
            <person name="Ishida J."/>
            <person name="Jiang P.X."/>
            <person name="Jones T."/>
            <person name="Kawai J."/>
            <person name="Kamiya A."/>
            <person name="Meyers C."/>
            <person name="Nakajima M."/>
            <person name="Narusaka M."/>
            <person name="Seki M."/>
            <person name="Sakurai T."/>
            <person name="Satou M."/>
            <person name="Tamse R."/>
            <person name="Vaysberg M."/>
            <person name="Wallender E.K."/>
            <person name="Wong C."/>
            <person name="Yamamura Y."/>
            <person name="Yuan S."/>
            <person name="Shinozaki K."/>
            <person name="Davis R.W."/>
            <person name="Theologis A."/>
            <person name="Ecker J.R."/>
        </authorList>
    </citation>
    <scope>NUCLEOTIDE SEQUENCE [LARGE SCALE MRNA] (ISOFORM 1)</scope>
    <source>
        <strain>cv. Columbia</strain>
    </source>
</reference>
<reference key="5">
    <citation type="submission" date="2002-03" db="EMBL/GenBank/DDBJ databases">
        <title>Full-length cDNA from Arabidopsis thaliana.</title>
        <authorList>
            <person name="Brover V.V."/>
            <person name="Troukhan M.E."/>
            <person name="Alexandrov N.A."/>
            <person name="Lu Y.-P."/>
            <person name="Flavell R.B."/>
            <person name="Feldmann K.A."/>
        </authorList>
    </citation>
    <scope>NUCLEOTIDE SEQUENCE [LARGE SCALE MRNA] (ISOFORM 1)</scope>
</reference>
<reference key="6">
    <citation type="journal article" date="2004" name="Plant Physiol.">
        <title>Immunophilins and parvulins. Superfamily of peptidyl prolyl isomerases in Arabidopsis.</title>
        <authorList>
            <person name="He Z."/>
            <person name="Li L."/>
            <person name="Luan S."/>
        </authorList>
    </citation>
    <scope>TISSUE SPECIFICITY</scope>
    <scope>GENE FAMILY</scope>
    <scope>NOMENCLATURE</scope>
</reference>
<reference key="7">
    <citation type="journal article" date="2004" name="Plant Physiol.">
        <title>The Arabidopsis cyclophilin gene family.</title>
        <authorList>
            <person name="Romano P.G.N."/>
            <person name="Horton P."/>
            <person name="Gray J.E."/>
        </authorList>
    </citation>
    <scope>GENE FAMILY</scope>
    <scope>NOMENCLATURE</scope>
</reference>
<reference key="8">
    <citation type="journal article" date="2005" name="J. Exp. Bot.">
        <title>Molecular analysis of Arabidopsis endosperm and embryo promoter trap lines: reporter-gene expression can result from T-DNA insertions in antisense orientation, in introns and in intergenic regions, in addition to sense insertion at the 5' end of genes.</title>
        <authorList>
            <person name="Stangeland B."/>
            <person name="Nestestog R."/>
            <person name="Grini P.E."/>
            <person name="Skrbo N."/>
            <person name="Berg A."/>
            <person name="Salehian Z."/>
            <person name="Mandal A."/>
            <person name="Aalen R.B."/>
        </authorList>
    </citation>
    <scope>TISSUE SPECIFICITY</scope>
</reference>
<reference key="9">
    <citation type="journal article" date="2014" name="Gene">
        <title>Characterization of three Arabidopsis thaliana immunophilin genes involved in the plant defense response against Pseudomonas syringae.</title>
        <authorList>
            <person name="Pogorelko G.V."/>
            <person name="Mokryakova M."/>
            <person name="Fursova O.V."/>
            <person name="Abdeeva I."/>
            <person name="Piruzian E.S."/>
            <person name="Bruskin S.A."/>
        </authorList>
    </citation>
    <scope>FUNCTION</scope>
    <scope>DISRUPTION PHENOTYPE</scope>
    <scope>INDUCTION BY PATHOGEN</scope>
    <scope>SUBCELLULAR LOCATION</scope>
</reference>
<reference key="10">
    <citation type="journal article" date="2014" name="Plant Cell">
        <title>A DEK domain-containing protein modulates chromatin structure and function in Arabidopsis.</title>
        <authorList>
            <person name="Waidmann S."/>
            <person name="Kusenda B."/>
            <person name="Mayerhofer J."/>
            <person name="Mechtler K."/>
            <person name="Jonak C."/>
        </authorList>
    </citation>
    <scope>INTERACTION WITH DEK3</scope>
    <scope>IDENTIFICATION BY MASS SPECTROMETRY</scope>
    <source>
        <strain>cv. Columbia</strain>
    </source>
</reference>
<dbReference type="EC" id="5.2.1.8" evidence="2"/>
<dbReference type="EMBL" id="U40399">
    <property type="protein sequence ID" value="AAB96832.1"/>
    <property type="molecule type" value="mRNA"/>
</dbReference>
<dbReference type="EMBL" id="AC005825">
    <property type="protein sequence ID" value="AAD24594.1"/>
    <property type="molecule type" value="Genomic_DNA"/>
</dbReference>
<dbReference type="EMBL" id="CP002685">
    <property type="protein sequence ID" value="AEC06517.1"/>
    <property type="molecule type" value="Genomic_DNA"/>
</dbReference>
<dbReference type="EMBL" id="CP002685">
    <property type="protein sequence ID" value="AEC06518.1"/>
    <property type="molecule type" value="Genomic_DNA"/>
</dbReference>
<dbReference type="EMBL" id="AY048215">
    <property type="protein sequence ID" value="AAK82478.1"/>
    <property type="molecule type" value="mRNA"/>
</dbReference>
<dbReference type="EMBL" id="AY091694">
    <property type="protein sequence ID" value="AAM10293.1"/>
    <property type="molecule type" value="mRNA"/>
</dbReference>
<dbReference type="EMBL" id="AY086330">
    <property type="protein sequence ID" value="AAM64399.1"/>
    <property type="molecule type" value="mRNA"/>
</dbReference>
<dbReference type="PIR" id="S71219">
    <property type="entry name" value="S71219"/>
</dbReference>
<dbReference type="RefSeq" id="NP_001077901.1">
    <molecule id="Q38900-2"/>
    <property type="nucleotide sequence ID" value="NM_001084432.1"/>
</dbReference>
<dbReference type="RefSeq" id="NP_001318231.1">
    <molecule id="Q38900-1"/>
    <property type="nucleotide sequence ID" value="NM_001335481.1"/>
</dbReference>
<dbReference type="SMR" id="Q38900"/>
<dbReference type="BioGRID" id="1518">
    <property type="interactions" value="7"/>
</dbReference>
<dbReference type="FunCoup" id="Q38900">
    <property type="interactions" value="2137"/>
</dbReference>
<dbReference type="IntAct" id="Q38900">
    <property type="interactions" value="2"/>
</dbReference>
<dbReference type="STRING" id="3702.Q38900"/>
<dbReference type="iPTMnet" id="Q38900"/>
<dbReference type="MetOSite" id="Q38900"/>
<dbReference type="PaxDb" id="3702-AT2G16600.1"/>
<dbReference type="ProteomicsDB" id="240661">
    <molecule id="Q38900-1"/>
</dbReference>
<dbReference type="EnsemblPlants" id="AT2G16600.1">
    <molecule id="Q38900-1"/>
    <property type="protein sequence ID" value="AT2G16600.1"/>
    <property type="gene ID" value="AT2G16600"/>
</dbReference>
<dbReference type="EnsemblPlants" id="AT2G16600.2">
    <molecule id="Q38900-2"/>
    <property type="protein sequence ID" value="AT2G16600.2"/>
    <property type="gene ID" value="AT2G16600"/>
</dbReference>
<dbReference type="GeneID" id="816161"/>
<dbReference type="Gramene" id="AT2G16600.1">
    <molecule id="Q38900-1"/>
    <property type="protein sequence ID" value="AT2G16600.1"/>
    <property type="gene ID" value="AT2G16600"/>
</dbReference>
<dbReference type="Gramene" id="AT2G16600.2">
    <molecule id="Q38900-2"/>
    <property type="protein sequence ID" value="AT2G16600.2"/>
    <property type="gene ID" value="AT2G16600"/>
</dbReference>
<dbReference type="KEGG" id="ath:AT2G16600"/>
<dbReference type="Araport" id="AT2G16600"/>
<dbReference type="TAIR" id="AT2G16600">
    <property type="gene designation" value="ROC3"/>
</dbReference>
<dbReference type="eggNOG" id="KOG0865">
    <property type="taxonomic scope" value="Eukaryota"/>
</dbReference>
<dbReference type="HOGENOM" id="CLU_012062_4_2_1"/>
<dbReference type="InParanoid" id="Q38900"/>
<dbReference type="OMA" id="TWLTGKH"/>
<dbReference type="OrthoDB" id="193499at2759"/>
<dbReference type="PhylomeDB" id="Q38900"/>
<dbReference type="CD-CODE" id="4299E36E">
    <property type="entry name" value="Nucleolus"/>
</dbReference>
<dbReference type="PRO" id="PR:Q38900"/>
<dbReference type="Proteomes" id="UP000006548">
    <property type="component" value="Chromosome 2"/>
</dbReference>
<dbReference type="ExpressionAtlas" id="Q38900">
    <property type="expression patterns" value="baseline and differential"/>
</dbReference>
<dbReference type="GO" id="GO:0009507">
    <property type="term" value="C:chloroplast"/>
    <property type="evidence" value="ECO:0007005"/>
    <property type="project" value="TAIR"/>
</dbReference>
<dbReference type="GO" id="GO:0005829">
    <property type="term" value="C:cytosol"/>
    <property type="evidence" value="ECO:0007005"/>
    <property type="project" value="TAIR"/>
</dbReference>
<dbReference type="GO" id="GO:0005794">
    <property type="term" value="C:Golgi apparatus"/>
    <property type="evidence" value="ECO:0007005"/>
    <property type="project" value="TAIR"/>
</dbReference>
<dbReference type="GO" id="GO:0005739">
    <property type="term" value="C:mitochondrion"/>
    <property type="evidence" value="ECO:0007005"/>
    <property type="project" value="TAIR"/>
</dbReference>
<dbReference type="GO" id="GO:0005886">
    <property type="term" value="C:plasma membrane"/>
    <property type="evidence" value="ECO:0007005"/>
    <property type="project" value="TAIR"/>
</dbReference>
<dbReference type="GO" id="GO:0009506">
    <property type="term" value="C:plasmodesma"/>
    <property type="evidence" value="ECO:0007005"/>
    <property type="project" value="TAIR"/>
</dbReference>
<dbReference type="GO" id="GO:0003755">
    <property type="term" value="F:peptidyl-prolyl cis-trans isomerase activity"/>
    <property type="evidence" value="ECO:0000250"/>
    <property type="project" value="TAIR"/>
</dbReference>
<dbReference type="GO" id="GO:0006457">
    <property type="term" value="P:protein folding"/>
    <property type="evidence" value="ECO:0007669"/>
    <property type="project" value="InterPro"/>
</dbReference>
<dbReference type="GO" id="GO:0009737">
    <property type="term" value="P:response to abscisic acid"/>
    <property type="evidence" value="ECO:0000270"/>
    <property type="project" value="TAIR"/>
</dbReference>
<dbReference type="GO" id="GO:0009414">
    <property type="term" value="P:response to water deprivation"/>
    <property type="evidence" value="ECO:0000270"/>
    <property type="project" value="TAIR"/>
</dbReference>
<dbReference type="GO" id="GO:0007165">
    <property type="term" value="P:signal transduction"/>
    <property type="evidence" value="ECO:0000250"/>
    <property type="project" value="TAIR"/>
</dbReference>
<dbReference type="CDD" id="cd01926">
    <property type="entry name" value="cyclophilin_ABH_like"/>
    <property type="match status" value="1"/>
</dbReference>
<dbReference type="FunFam" id="2.40.100.10:FF:000002">
    <property type="entry name" value="Peptidyl-prolyl cis-trans isomerase"/>
    <property type="match status" value="1"/>
</dbReference>
<dbReference type="Gene3D" id="2.40.100.10">
    <property type="entry name" value="Cyclophilin-like"/>
    <property type="match status" value="1"/>
</dbReference>
<dbReference type="InterPro" id="IPR029000">
    <property type="entry name" value="Cyclophilin-like_dom_sf"/>
</dbReference>
<dbReference type="InterPro" id="IPR024936">
    <property type="entry name" value="Cyclophilin-type_PPIase"/>
</dbReference>
<dbReference type="InterPro" id="IPR020892">
    <property type="entry name" value="Cyclophilin-type_PPIase_CS"/>
</dbReference>
<dbReference type="InterPro" id="IPR002130">
    <property type="entry name" value="Cyclophilin-type_PPIase_dom"/>
</dbReference>
<dbReference type="PANTHER" id="PTHR11071">
    <property type="entry name" value="PEPTIDYL-PROLYL CIS-TRANS ISOMERASE"/>
    <property type="match status" value="1"/>
</dbReference>
<dbReference type="PANTHER" id="PTHR11071:SF538">
    <property type="entry name" value="PEPTIDYL-PROLYL CIS-TRANS ISOMERASE CYP19-1"/>
    <property type="match status" value="1"/>
</dbReference>
<dbReference type="Pfam" id="PF00160">
    <property type="entry name" value="Pro_isomerase"/>
    <property type="match status" value="1"/>
</dbReference>
<dbReference type="PIRSF" id="PIRSF001467">
    <property type="entry name" value="Peptidylpro_ismrse"/>
    <property type="match status" value="1"/>
</dbReference>
<dbReference type="PRINTS" id="PR00153">
    <property type="entry name" value="CSAPPISMRASE"/>
</dbReference>
<dbReference type="SUPFAM" id="SSF50891">
    <property type="entry name" value="Cyclophilin-like"/>
    <property type="match status" value="1"/>
</dbReference>
<dbReference type="PROSITE" id="PS00170">
    <property type="entry name" value="CSA_PPIASE_1"/>
    <property type="match status" value="1"/>
</dbReference>
<dbReference type="PROSITE" id="PS50072">
    <property type="entry name" value="CSA_PPIASE_2"/>
    <property type="match status" value="1"/>
</dbReference>
<protein>
    <recommendedName>
        <fullName evidence="9 10">Peptidyl-prolyl cis-trans isomerase CYP19-1</fullName>
        <shortName evidence="9 10">PPIase CYP19-1</shortName>
        <ecNumber evidence="2">5.2.1.8</ecNumber>
    </recommendedName>
    <alternativeName>
        <fullName evidence="9 10">Cyclophilin of 19 kDa 1</fullName>
    </alternativeName>
    <alternativeName>
        <fullName evidence="10 11">Rotamase cyclophilin-3</fullName>
    </alternativeName>
</protein>
<keyword id="KW-0025">Alternative splicing</keyword>
<keyword id="KW-0143">Chaperone</keyword>
<keyword id="KW-0963">Cytoplasm</keyword>
<keyword id="KW-0413">Isomerase</keyword>
<keyword id="KW-1185">Reference proteome</keyword>
<keyword id="KW-0697">Rotamase</keyword>
<evidence type="ECO:0000250" key="1"/>
<evidence type="ECO:0000250" key="2">
    <source>
        <dbReference type="UniProtKB" id="P62937"/>
    </source>
</evidence>
<evidence type="ECO:0000255" key="3">
    <source>
        <dbReference type="PROSITE-ProRule" id="PRU00156"/>
    </source>
</evidence>
<evidence type="ECO:0000269" key="4">
    <source>
    </source>
</evidence>
<evidence type="ECO:0000269" key="5">
    <source>
    </source>
</evidence>
<evidence type="ECO:0000269" key="6">
    <source>
    </source>
</evidence>
<evidence type="ECO:0000269" key="7">
    <source>
    </source>
</evidence>
<evidence type="ECO:0000269" key="8">
    <source>
    </source>
</evidence>
<evidence type="ECO:0000303" key="9">
    <source>
    </source>
</evidence>
<evidence type="ECO:0000303" key="10">
    <source>
    </source>
</evidence>
<evidence type="ECO:0000303" key="11">
    <source>
    </source>
</evidence>
<evidence type="ECO:0000305" key="12"/>
<evidence type="ECO:0000312" key="13">
    <source>
        <dbReference type="Araport" id="AT2G16600"/>
    </source>
</evidence>
<evidence type="ECO:0000312" key="14">
    <source>
        <dbReference type="EMBL" id="AAD24594.1"/>
    </source>
</evidence>
<organism>
    <name type="scientific">Arabidopsis thaliana</name>
    <name type="common">Mouse-ear cress</name>
    <dbReference type="NCBI Taxonomy" id="3702"/>
    <lineage>
        <taxon>Eukaryota</taxon>
        <taxon>Viridiplantae</taxon>
        <taxon>Streptophyta</taxon>
        <taxon>Embryophyta</taxon>
        <taxon>Tracheophyta</taxon>
        <taxon>Spermatophyta</taxon>
        <taxon>Magnoliopsida</taxon>
        <taxon>eudicotyledons</taxon>
        <taxon>Gunneridae</taxon>
        <taxon>Pentapetalae</taxon>
        <taxon>rosids</taxon>
        <taxon>malvids</taxon>
        <taxon>Brassicales</taxon>
        <taxon>Brassicaceae</taxon>
        <taxon>Camelineae</taxon>
        <taxon>Arabidopsis</taxon>
    </lineage>
</organism>
<comment type="function">
    <text evidence="6">PPIases accelerate the folding of proteins. It catalyzes the cis-trans isomerization of proline imidic peptide bonds in oligopeptides. Involved in reactive oxygen species production in response to pathogen infection.</text>
</comment>
<comment type="catalytic activity">
    <reaction evidence="2">
        <text>[protein]-peptidylproline (omega=180) = [protein]-peptidylproline (omega=0)</text>
        <dbReference type="Rhea" id="RHEA:16237"/>
        <dbReference type="Rhea" id="RHEA-COMP:10747"/>
        <dbReference type="Rhea" id="RHEA-COMP:10748"/>
        <dbReference type="ChEBI" id="CHEBI:83833"/>
        <dbReference type="ChEBI" id="CHEBI:83834"/>
        <dbReference type="EC" id="5.2.1.8"/>
    </reaction>
</comment>
<comment type="activity regulation">
    <text evidence="1">Binds cyclosporin A (CsA). CsA mediates some of its effects via an inhibitory action on PPIase (By similarity).</text>
</comment>
<comment type="subunit">
    <text evidence="7">Interacts with DEK3.</text>
</comment>
<comment type="subcellular location">
    <subcellularLocation>
        <location evidence="6">Cytoplasm</location>
    </subcellularLocation>
</comment>
<comment type="alternative products">
    <event type="alternative splicing"/>
    <isoform>
        <id>Q38900-1</id>
        <name>1</name>
        <sequence type="displayed"/>
    </isoform>
    <isoform>
        <id>Q38900-2</id>
        <name>2</name>
        <sequence type="described" ref="VSP_055385"/>
    </isoform>
</comment>
<comment type="tissue specificity">
    <text evidence="4 5 8">Ubiquitous with higher levels in stems and flowers. In seeds, present in endosperm and embryo.</text>
</comment>
<comment type="induction">
    <text evidence="6 8">Up-regulated by light, wounding and pathogen infection.</text>
</comment>
<comment type="disruption phenotype">
    <text evidence="6">Increased susceptibility to P.syringae infection.</text>
</comment>
<comment type="similarity">
    <text evidence="12">Belongs to the cyclophilin-type PPIase family.</text>
</comment>
<gene>
    <name evidence="9 10" type="primary">CYP19-1</name>
    <name evidence="10 11" type="synonym">ROC3</name>
    <name evidence="13" type="ordered locus">At2g16600</name>
    <name evidence="14" type="ORF">T24I21.1</name>
</gene>
<sequence length="173" mass="18492">MATNPKVYFDMTVGGKSAGRIVMELYADTTPETAENFRALCTGERGIGKQGKPLHYKGSSFHRVIPKFMCQGGDFTAGNGTGGESIYGSKFKDENFIKKHTGPGILSMANAGANTNGSQFFICTEKTSWLDGKHVVFGQVVEGLNVVRDIEKVGSDSGRTSKPVVIADCGQIS</sequence>
<name>CP19A_ARATH</name>
<feature type="chain" id="PRO_0000064135" description="Peptidyl-prolyl cis-trans isomerase CYP19-1">
    <location>
        <begin position="1"/>
        <end position="173"/>
    </location>
</feature>
<feature type="domain" description="PPIase cyclophilin-type" evidence="3">
    <location>
        <begin position="8"/>
        <end position="171"/>
    </location>
</feature>
<feature type="splice variant" id="VSP_055385" description="In isoform 2." evidence="12">
    <location>
        <begin position="51"/>
        <end position="72"/>
    </location>
</feature>
<proteinExistence type="evidence at protein level"/>
<accession>Q38900</accession>
<accession>F4IL99</accession>